<keyword id="KW-0963">Cytoplasm</keyword>
<keyword id="KW-0227">DNA damage</keyword>
<keyword id="KW-0234">DNA repair</keyword>
<keyword id="KW-0235">DNA replication</keyword>
<keyword id="KW-0238">DNA-binding</keyword>
<keyword id="KW-0239">DNA-directed DNA polymerase</keyword>
<keyword id="KW-0460">Magnesium</keyword>
<keyword id="KW-0479">Metal-binding</keyword>
<keyword id="KW-0515">Mutator protein</keyword>
<keyword id="KW-0548">Nucleotidyltransferase</keyword>
<keyword id="KW-0808">Transferase</keyword>
<evidence type="ECO:0000255" key="1">
    <source>
        <dbReference type="HAMAP-Rule" id="MF_01113"/>
    </source>
</evidence>
<protein>
    <recommendedName>
        <fullName evidence="1">DNA polymerase IV</fullName>
        <shortName evidence="1">Pol IV</shortName>
        <ecNumber evidence="1">2.7.7.7</ecNumber>
    </recommendedName>
</protein>
<feature type="chain" id="PRO_1000084889" description="DNA polymerase IV">
    <location>
        <begin position="1"/>
        <end position="351"/>
    </location>
</feature>
<feature type="domain" description="UmuC" evidence="1">
    <location>
        <begin position="4"/>
        <end position="185"/>
    </location>
</feature>
<feature type="active site" evidence="1">
    <location>
        <position position="104"/>
    </location>
</feature>
<feature type="binding site" evidence="1">
    <location>
        <position position="8"/>
    </location>
    <ligand>
        <name>Mg(2+)</name>
        <dbReference type="ChEBI" id="CHEBI:18420"/>
    </ligand>
</feature>
<feature type="binding site" evidence="1">
    <location>
        <position position="103"/>
    </location>
    <ligand>
        <name>Mg(2+)</name>
        <dbReference type="ChEBI" id="CHEBI:18420"/>
    </ligand>
</feature>
<feature type="site" description="Substrate discrimination" evidence="1">
    <location>
        <position position="13"/>
    </location>
</feature>
<sequence>MRKIIHVDMDCFFAAVEMRDNPALRDIPIAIGGSRERRGVISTANYPARKFGVRSAMPTGMALKLCPHLTLLPGRFDAYKEASNHIREIFSRYTSRIEPLSLDEAYLDVTDSVHCHGSATLIAQEIRQTIFSELQLTASAGVAPVKFLAKIASDMNKPNGQFVITPAEVPAFLQTLPLAKIPGVGKVSAAKLEAMGLRTCGDVQKCDLVILLKRFGKFGRILWERSQGIDERDVNSERLRKSVGVERTMAEDIHHWSECEAIIERLYPELERRLAKVKPDLLIARQGVKLKFDDFQQTTQEHVWPRLNKADLIATARKTWDERRGGRGVRLVGLHVTLLDPQMERQLVLGL</sequence>
<comment type="function">
    <text evidence="1">Poorly processive, error-prone DNA polymerase involved in untargeted mutagenesis. Copies undamaged DNA at stalled replication forks, which arise in vivo from mismatched or misaligned primer ends. These misaligned primers can be extended by PolIV. Exhibits no 3'-5' exonuclease (proofreading) activity. May be involved in translesional synthesis, in conjunction with the beta clamp from PolIII.</text>
</comment>
<comment type="catalytic activity">
    <reaction evidence="1">
        <text>DNA(n) + a 2'-deoxyribonucleoside 5'-triphosphate = DNA(n+1) + diphosphate</text>
        <dbReference type="Rhea" id="RHEA:22508"/>
        <dbReference type="Rhea" id="RHEA-COMP:17339"/>
        <dbReference type="Rhea" id="RHEA-COMP:17340"/>
        <dbReference type="ChEBI" id="CHEBI:33019"/>
        <dbReference type="ChEBI" id="CHEBI:61560"/>
        <dbReference type="ChEBI" id="CHEBI:173112"/>
        <dbReference type="EC" id="2.7.7.7"/>
    </reaction>
</comment>
<comment type="cofactor">
    <cofactor evidence="1">
        <name>Mg(2+)</name>
        <dbReference type="ChEBI" id="CHEBI:18420"/>
    </cofactor>
    <text evidence="1">Binds 2 magnesium ions per subunit.</text>
</comment>
<comment type="subunit">
    <text evidence="1">Monomer.</text>
</comment>
<comment type="subcellular location">
    <subcellularLocation>
        <location evidence="1">Cytoplasm</location>
    </subcellularLocation>
</comment>
<comment type="similarity">
    <text evidence="1">Belongs to the DNA polymerase type-Y family.</text>
</comment>
<accession>A7ZWJ6</accession>
<gene>
    <name evidence="1" type="primary">dinB</name>
    <name type="ordered locus">EcHS_A0260</name>
</gene>
<organism>
    <name type="scientific">Escherichia coli O9:H4 (strain HS)</name>
    <dbReference type="NCBI Taxonomy" id="331112"/>
    <lineage>
        <taxon>Bacteria</taxon>
        <taxon>Pseudomonadati</taxon>
        <taxon>Pseudomonadota</taxon>
        <taxon>Gammaproteobacteria</taxon>
        <taxon>Enterobacterales</taxon>
        <taxon>Enterobacteriaceae</taxon>
        <taxon>Escherichia</taxon>
    </lineage>
</organism>
<reference key="1">
    <citation type="journal article" date="2008" name="J. Bacteriol.">
        <title>The pangenome structure of Escherichia coli: comparative genomic analysis of E. coli commensal and pathogenic isolates.</title>
        <authorList>
            <person name="Rasko D.A."/>
            <person name="Rosovitz M.J."/>
            <person name="Myers G.S.A."/>
            <person name="Mongodin E.F."/>
            <person name="Fricke W.F."/>
            <person name="Gajer P."/>
            <person name="Crabtree J."/>
            <person name="Sebaihia M."/>
            <person name="Thomson N.R."/>
            <person name="Chaudhuri R."/>
            <person name="Henderson I.R."/>
            <person name="Sperandio V."/>
            <person name="Ravel J."/>
        </authorList>
    </citation>
    <scope>NUCLEOTIDE SEQUENCE [LARGE SCALE GENOMIC DNA]</scope>
    <source>
        <strain>HS</strain>
    </source>
</reference>
<name>DPO4_ECOHS</name>
<proteinExistence type="inferred from homology"/>
<dbReference type="EC" id="2.7.7.7" evidence="1"/>
<dbReference type="EMBL" id="CP000802">
    <property type="protein sequence ID" value="ABV04650.1"/>
    <property type="molecule type" value="Genomic_DNA"/>
</dbReference>
<dbReference type="RefSeq" id="WP_001226182.1">
    <property type="nucleotide sequence ID" value="NC_009800.1"/>
</dbReference>
<dbReference type="SMR" id="A7ZWJ6"/>
<dbReference type="KEGG" id="ecx:EcHS_A0260"/>
<dbReference type="HOGENOM" id="CLU_012348_1_2_6"/>
<dbReference type="GO" id="GO:0005829">
    <property type="term" value="C:cytosol"/>
    <property type="evidence" value="ECO:0007669"/>
    <property type="project" value="TreeGrafter"/>
</dbReference>
<dbReference type="GO" id="GO:0003684">
    <property type="term" value="F:damaged DNA binding"/>
    <property type="evidence" value="ECO:0007669"/>
    <property type="project" value="InterPro"/>
</dbReference>
<dbReference type="GO" id="GO:0003887">
    <property type="term" value="F:DNA-directed DNA polymerase activity"/>
    <property type="evidence" value="ECO:0007669"/>
    <property type="project" value="UniProtKB-UniRule"/>
</dbReference>
<dbReference type="GO" id="GO:0000287">
    <property type="term" value="F:magnesium ion binding"/>
    <property type="evidence" value="ECO:0007669"/>
    <property type="project" value="UniProtKB-UniRule"/>
</dbReference>
<dbReference type="GO" id="GO:0006261">
    <property type="term" value="P:DNA-templated DNA replication"/>
    <property type="evidence" value="ECO:0007669"/>
    <property type="project" value="UniProtKB-UniRule"/>
</dbReference>
<dbReference type="GO" id="GO:0042276">
    <property type="term" value="P:error-prone translesion synthesis"/>
    <property type="evidence" value="ECO:0007669"/>
    <property type="project" value="TreeGrafter"/>
</dbReference>
<dbReference type="GO" id="GO:0009432">
    <property type="term" value="P:SOS response"/>
    <property type="evidence" value="ECO:0007669"/>
    <property type="project" value="TreeGrafter"/>
</dbReference>
<dbReference type="CDD" id="cd03586">
    <property type="entry name" value="PolY_Pol_IV_kappa"/>
    <property type="match status" value="1"/>
</dbReference>
<dbReference type="FunFam" id="1.10.150.20:FF:000019">
    <property type="entry name" value="DNA polymerase IV"/>
    <property type="match status" value="1"/>
</dbReference>
<dbReference type="FunFam" id="3.30.1490.100:FF:000002">
    <property type="entry name" value="DNA polymerase IV"/>
    <property type="match status" value="1"/>
</dbReference>
<dbReference type="FunFam" id="3.30.70.270:FF:000002">
    <property type="entry name" value="DNA polymerase IV"/>
    <property type="match status" value="1"/>
</dbReference>
<dbReference type="FunFam" id="3.40.1170.60:FF:000001">
    <property type="entry name" value="DNA polymerase IV"/>
    <property type="match status" value="1"/>
</dbReference>
<dbReference type="Gene3D" id="3.30.70.270">
    <property type="match status" value="1"/>
</dbReference>
<dbReference type="Gene3D" id="3.40.1170.60">
    <property type="match status" value="1"/>
</dbReference>
<dbReference type="Gene3D" id="1.10.150.20">
    <property type="entry name" value="5' to 3' exonuclease, C-terminal subdomain"/>
    <property type="match status" value="1"/>
</dbReference>
<dbReference type="Gene3D" id="3.30.1490.100">
    <property type="entry name" value="DNA polymerase, Y-family, little finger domain"/>
    <property type="match status" value="1"/>
</dbReference>
<dbReference type="HAMAP" id="MF_01113">
    <property type="entry name" value="DNApol_IV"/>
    <property type="match status" value="1"/>
</dbReference>
<dbReference type="InterPro" id="IPR043502">
    <property type="entry name" value="DNA/RNA_pol_sf"/>
</dbReference>
<dbReference type="InterPro" id="IPR036775">
    <property type="entry name" value="DNA_pol_Y-fam_lit_finger_sf"/>
</dbReference>
<dbReference type="InterPro" id="IPR017961">
    <property type="entry name" value="DNA_pol_Y-fam_little_finger"/>
</dbReference>
<dbReference type="InterPro" id="IPR050116">
    <property type="entry name" value="DNA_polymerase-Y"/>
</dbReference>
<dbReference type="InterPro" id="IPR022880">
    <property type="entry name" value="DNApol_IV"/>
</dbReference>
<dbReference type="InterPro" id="IPR053848">
    <property type="entry name" value="IMS_HHH_1"/>
</dbReference>
<dbReference type="InterPro" id="IPR043128">
    <property type="entry name" value="Rev_trsase/Diguanyl_cyclase"/>
</dbReference>
<dbReference type="InterPro" id="IPR001126">
    <property type="entry name" value="UmuC"/>
</dbReference>
<dbReference type="NCBIfam" id="NF002677">
    <property type="entry name" value="PRK02406.1"/>
    <property type="match status" value="1"/>
</dbReference>
<dbReference type="PANTHER" id="PTHR11076:SF33">
    <property type="entry name" value="DNA POLYMERASE KAPPA"/>
    <property type="match status" value="1"/>
</dbReference>
<dbReference type="PANTHER" id="PTHR11076">
    <property type="entry name" value="DNA REPAIR POLYMERASE UMUC / TRANSFERASE FAMILY MEMBER"/>
    <property type="match status" value="1"/>
</dbReference>
<dbReference type="Pfam" id="PF00817">
    <property type="entry name" value="IMS"/>
    <property type="match status" value="1"/>
</dbReference>
<dbReference type="Pfam" id="PF11799">
    <property type="entry name" value="IMS_C"/>
    <property type="match status" value="1"/>
</dbReference>
<dbReference type="Pfam" id="PF21999">
    <property type="entry name" value="IMS_HHH_1"/>
    <property type="match status" value="1"/>
</dbReference>
<dbReference type="SUPFAM" id="SSF56672">
    <property type="entry name" value="DNA/RNA polymerases"/>
    <property type="match status" value="1"/>
</dbReference>
<dbReference type="SUPFAM" id="SSF100879">
    <property type="entry name" value="Lesion bypass DNA polymerase (Y-family), little finger domain"/>
    <property type="match status" value="1"/>
</dbReference>
<dbReference type="PROSITE" id="PS50173">
    <property type="entry name" value="UMUC"/>
    <property type="match status" value="1"/>
</dbReference>